<name>ARGB_SERP5</name>
<organism>
    <name type="scientific">Serratia proteamaculans (strain 568)</name>
    <dbReference type="NCBI Taxonomy" id="399741"/>
    <lineage>
        <taxon>Bacteria</taxon>
        <taxon>Pseudomonadati</taxon>
        <taxon>Pseudomonadota</taxon>
        <taxon>Gammaproteobacteria</taxon>
        <taxon>Enterobacterales</taxon>
        <taxon>Yersiniaceae</taxon>
        <taxon>Serratia</taxon>
    </lineage>
</organism>
<gene>
    <name evidence="1" type="primary">argB</name>
    <name type="ordered locus">Spro_4780</name>
</gene>
<protein>
    <recommendedName>
        <fullName evidence="1">Acetylglutamate kinase</fullName>
        <ecNumber evidence="1">2.7.2.8</ecNumber>
    </recommendedName>
    <alternativeName>
        <fullName evidence="1">N-acetyl-L-glutamate 5-phosphotransferase</fullName>
    </alternativeName>
    <alternativeName>
        <fullName evidence="1">NAG kinase</fullName>
        <shortName evidence="1">NAGK</shortName>
    </alternativeName>
</protein>
<reference key="1">
    <citation type="submission" date="2007-09" db="EMBL/GenBank/DDBJ databases">
        <title>Complete sequence of chromosome of Serratia proteamaculans 568.</title>
        <authorList>
            <consortium name="US DOE Joint Genome Institute"/>
            <person name="Copeland A."/>
            <person name="Lucas S."/>
            <person name="Lapidus A."/>
            <person name="Barry K."/>
            <person name="Glavina del Rio T."/>
            <person name="Dalin E."/>
            <person name="Tice H."/>
            <person name="Pitluck S."/>
            <person name="Chain P."/>
            <person name="Malfatti S."/>
            <person name="Shin M."/>
            <person name="Vergez L."/>
            <person name="Schmutz J."/>
            <person name="Larimer F."/>
            <person name="Land M."/>
            <person name="Hauser L."/>
            <person name="Kyrpides N."/>
            <person name="Kim E."/>
            <person name="Taghavi S."/>
            <person name="Newman L."/>
            <person name="Vangronsveld J."/>
            <person name="van der Lelie D."/>
            <person name="Richardson P."/>
        </authorList>
    </citation>
    <scope>NUCLEOTIDE SEQUENCE [LARGE SCALE GENOMIC DNA]</scope>
    <source>
        <strain>568</strain>
    </source>
</reference>
<comment type="function">
    <text evidence="1">Catalyzes the ATP-dependent phosphorylation of N-acetyl-L-glutamate.</text>
</comment>
<comment type="catalytic activity">
    <reaction evidence="1">
        <text>N-acetyl-L-glutamate + ATP = N-acetyl-L-glutamyl 5-phosphate + ADP</text>
        <dbReference type="Rhea" id="RHEA:14629"/>
        <dbReference type="ChEBI" id="CHEBI:30616"/>
        <dbReference type="ChEBI" id="CHEBI:44337"/>
        <dbReference type="ChEBI" id="CHEBI:57936"/>
        <dbReference type="ChEBI" id="CHEBI:456216"/>
        <dbReference type="EC" id="2.7.2.8"/>
    </reaction>
</comment>
<comment type="pathway">
    <text evidence="1">Amino-acid biosynthesis; L-arginine biosynthesis; N(2)-acetyl-L-ornithine from L-glutamate: step 2/4.</text>
</comment>
<comment type="subunit">
    <text evidence="1">Homodimer.</text>
</comment>
<comment type="subcellular location">
    <subcellularLocation>
        <location evidence="1">Cytoplasm</location>
    </subcellularLocation>
</comment>
<comment type="similarity">
    <text evidence="1">Belongs to the acetylglutamate kinase family. ArgB subfamily.</text>
</comment>
<accession>A8GL83</accession>
<sequence>MNPLIIKLGGVLLDSEEALERLFTALDSYRQQHQRPLVIVHGGGCLVDELMKKLSLPVVKKNGLRVTPADQIDIITGALAGTANKTLLAWAIKHQINAVGLSLADGGSVTVTPLDPALGHVGNAQPGSPLLLNTLLGAGYLPVISSIGITADGQLMNVNADQAATALAATLGADLILLSDVSGILDGKGQRIAEMTAQKAEQLIAQGIITDGMVVKVNAALDAARTLGRPVDIASWRHADQLPALFNGVSIGTRILA</sequence>
<proteinExistence type="inferred from homology"/>
<feature type="chain" id="PRO_1000057541" description="Acetylglutamate kinase">
    <location>
        <begin position="1"/>
        <end position="257"/>
    </location>
</feature>
<feature type="binding site" evidence="1">
    <location>
        <begin position="43"/>
        <end position="44"/>
    </location>
    <ligand>
        <name>substrate</name>
    </ligand>
</feature>
<feature type="binding site" evidence="1">
    <location>
        <position position="65"/>
    </location>
    <ligand>
        <name>substrate</name>
    </ligand>
</feature>
<feature type="binding site" evidence="1">
    <location>
        <position position="157"/>
    </location>
    <ligand>
        <name>substrate</name>
    </ligand>
</feature>
<feature type="binding site" evidence="1">
    <location>
        <begin position="180"/>
        <end position="185"/>
    </location>
    <ligand>
        <name>ATP</name>
        <dbReference type="ChEBI" id="CHEBI:30616"/>
    </ligand>
</feature>
<feature type="binding site" evidence="1">
    <location>
        <begin position="208"/>
        <end position="210"/>
    </location>
    <ligand>
        <name>ATP</name>
        <dbReference type="ChEBI" id="CHEBI:30616"/>
    </ligand>
</feature>
<feature type="site" description="Transition state stabilizer" evidence="1">
    <location>
        <position position="7"/>
    </location>
</feature>
<feature type="site" description="Transition state stabilizer" evidence="1">
    <location>
        <position position="216"/>
    </location>
</feature>
<keyword id="KW-0028">Amino-acid biosynthesis</keyword>
<keyword id="KW-0055">Arginine biosynthesis</keyword>
<keyword id="KW-0067">ATP-binding</keyword>
<keyword id="KW-0963">Cytoplasm</keyword>
<keyword id="KW-0418">Kinase</keyword>
<keyword id="KW-0547">Nucleotide-binding</keyword>
<keyword id="KW-0808">Transferase</keyword>
<dbReference type="EC" id="2.7.2.8" evidence="1"/>
<dbReference type="EMBL" id="CP000826">
    <property type="protein sequence ID" value="ABV43873.1"/>
    <property type="molecule type" value="Genomic_DNA"/>
</dbReference>
<dbReference type="SMR" id="A8GL83"/>
<dbReference type="STRING" id="399741.Spro_4780"/>
<dbReference type="KEGG" id="spe:Spro_4780"/>
<dbReference type="eggNOG" id="COG0548">
    <property type="taxonomic scope" value="Bacteria"/>
</dbReference>
<dbReference type="HOGENOM" id="CLU_053680_1_1_6"/>
<dbReference type="OrthoDB" id="5915023at2"/>
<dbReference type="UniPathway" id="UPA00068">
    <property type="reaction ID" value="UER00107"/>
</dbReference>
<dbReference type="GO" id="GO:0005737">
    <property type="term" value="C:cytoplasm"/>
    <property type="evidence" value="ECO:0007669"/>
    <property type="project" value="UniProtKB-SubCell"/>
</dbReference>
<dbReference type="GO" id="GO:0003991">
    <property type="term" value="F:acetylglutamate kinase activity"/>
    <property type="evidence" value="ECO:0007669"/>
    <property type="project" value="UniProtKB-UniRule"/>
</dbReference>
<dbReference type="GO" id="GO:0005524">
    <property type="term" value="F:ATP binding"/>
    <property type="evidence" value="ECO:0007669"/>
    <property type="project" value="UniProtKB-UniRule"/>
</dbReference>
<dbReference type="GO" id="GO:0042450">
    <property type="term" value="P:arginine biosynthetic process via ornithine"/>
    <property type="evidence" value="ECO:0007669"/>
    <property type="project" value="UniProtKB-UniRule"/>
</dbReference>
<dbReference type="GO" id="GO:0006526">
    <property type="term" value="P:L-arginine biosynthetic process"/>
    <property type="evidence" value="ECO:0007669"/>
    <property type="project" value="UniProtKB-UniPathway"/>
</dbReference>
<dbReference type="CDD" id="cd04249">
    <property type="entry name" value="AAK_NAGK-NC"/>
    <property type="match status" value="1"/>
</dbReference>
<dbReference type="FunFam" id="3.40.1160.10:FF:000008">
    <property type="entry name" value="Acetylglutamate kinase"/>
    <property type="match status" value="1"/>
</dbReference>
<dbReference type="Gene3D" id="3.40.1160.10">
    <property type="entry name" value="Acetylglutamate kinase-like"/>
    <property type="match status" value="1"/>
</dbReference>
<dbReference type="HAMAP" id="MF_00082">
    <property type="entry name" value="ArgB"/>
    <property type="match status" value="1"/>
</dbReference>
<dbReference type="InterPro" id="IPR036393">
    <property type="entry name" value="AceGlu_kinase-like_sf"/>
</dbReference>
<dbReference type="InterPro" id="IPR004662">
    <property type="entry name" value="AcgluKinase_fam"/>
</dbReference>
<dbReference type="InterPro" id="IPR037528">
    <property type="entry name" value="ArgB"/>
</dbReference>
<dbReference type="InterPro" id="IPR001048">
    <property type="entry name" value="Asp/Glu/Uridylate_kinase"/>
</dbReference>
<dbReference type="InterPro" id="IPR041731">
    <property type="entry name" value="NAGK-NC"/>
</dbReference>
<dbReference type="NCBIfam" id="TIGR00761">
    <property type="entry name" value="argB"/>
    <property type="match status" value="1"/>
</dbReference>
<dbReference type="PANTHER" id="PTHR23342">
    <property type="entry name" value="N-ACETYLGLUTAMATE SYNTHASE"/>
    <property type="match status" value="1"/>
</dbReference>
<dbReference type="PANTHER" id="PTHR23342:SF0">
    <property type="entry name" value="N-ACETYLGLUTAMATE SYNTHASE, MITOCHONDRIAL"/>
    <property type="match status" value="1"/>
</dbReference>
<dbReference type="Pfam" id="PF00696">
    <property type="entry name" value="AA_kinase"/>
    <property type="match status" value="1"/>
</dbReference>
<dbReference type="PIRSF" id="PIRSF000728">
    <property type="entry name" value="NAGK"/>
    <property type="match status" value="1"/>
</dbReference>
<dbReference type="SUPFAM" id="SSF53633">
    <property type="entry name" value="Carbamate kinase-like"/>
    <property type="match status" value="1"/>
</dbReference>
<evidence type="ECO:0000255" key="1">
    <source>
        <dbReference type="HAMAP-Rule" id="MF_00082"/>
    </source>
</evidence>